<evidence type="ECO:0000250" key="1">
    <source>
        <dbReference type="UniProtKB" id="P03734"/>
    </source>
</evidence>
<evidence type="ECO:0000305" key="2"/>
<name>VG24_BPMD2</name>
<organismHost>
    <name type="scientific">Mycobacterium</name>
    <dbReference type="NCBI Taxonomy" id="1763"/>
</organismHost>
<accession>O64218</accession>
<comment type="function">
    <text evidence="1">Promotes tail assembly by creating a scaffold for the tail tube proteins. The tail assembly proteins Gp24 and Gp25 would wrap the linear tape measure protein to create a tail assembly scaffold. It would allow polymerization of tail tube protein during which Gp24 and Gp25 are released and therefore are absent from the mature virion. The tail assembly protein Gp25 is produced by a rare -1 ribosomal frameshift. The ratio Gp24/Gp25 is important for proper tail assembly.</text>
</comment>
<comment type="subunit">
    <text evidence="1">Interacts with tail assembly protein Gp25 and tape measure protein.</text>
</comment>
<comment type="alternative products">
    <event type="ribosomal frameshifting"/>
    <isoform>
        <id>O64218-1</id>
        <name>Tail assembly protein Gp24</name>
        <sequence type="displayed"/>
    </isoform>
    <isoform>
        <id>O64219-1</id>
        <name>Tail assembly protein Gp25</name>
        <sequence type="external"/>
    </isoform>
</comment>
<comment type="miscellaneous">
    <molecule>Isoform Tail assembly protein Gp24</molecule>
    <text>Produced by conventional translation.</text>
</comment>
<comment type="similarity">
    <text evidence="2">Belongs to the L5likevirus tail assembly protein family.</text>
</comment>
<gene>
    <name type="primary">24</name>
</gene>
<protein>
    <recommendedName>
        <fullName evidence="2">Tail assembly protein Gp24</fullName>
    </recommendedName>
    <alternativeName>
        <fullName>Gene product 24</fullName>
    </alternativeName>
    <alternativeName>
        <fullName>Gp24</fullName>
    </alternativeName>
    <alternativeName>
        <fullName evidence="2">Minor tail protein Gp24</fullName>
    </alternativeName>
</protein>
<dbReference type="EMBL" id="AF022214">
    <property type="protein sequence ID" value="AAC18465.1"/>
    <property type="molecule type" value="Genomic_DNA"/>
</dbReference>
<dbReference type="PIR" id="F72802">
    <property type="entry name" value="F72802"/>
</dbReference>
<dbReference type="RefSeq" id="NP_046840.1">
    <property type="nucleotide sequence ID" value="NC_001900.1"/>
</dbReference>
<dbReference type="GeneID" id="1261597"/>
<dbReference type="KEGG" id="vg:1261597"/>
<dbReference type="OrthoDB" id="7980at10239"/>
<dbReference type="Proteomes" id="UP000002131">
    <property type="component" value="Segment"/>
</dbReference>
<dbReference type="GO" id="GO:0098003">
    <property type="term" value="P:viral tail assembly"/>
    <property type="evidence" value="ECO:0007669"/>
    <property type="project" value="UniProtKB-KW"/>
</dbReference>
<dbReference type="GO" id="GO:0075523">
    <property type="term" value="P:viral translational frameshifting"/>
    <property type="evidence" value="ECO:0007669"/>
    <property type="project" value="UniProtKB-KW"/>
</dbReference>
<dbReference type="InterPro" id="IPR020132">
    <property type="entry name" value="Gp24/Gp25"/>
</dbReference>
<dbReference type="Pfam" id="PF17388">
    <property type="entry name" value="GP24_25"/>
    <property type="match status" value="1"/>
</dbReference>
<feature type="chain" id="PRO_0000164736" description="Tail assembly protein Gp24">
    <location>
        <begin position="1"/>
        <end position="134"/>
    </location>
</feature>
<organism>
    <name type="scientific">Mycobacterium phage D29</name>
    <name type="common">Mycobacteriophage D29</name>
    <dbReference type="NCBI Taxonomy" id="28369"/>
    <lineage>
        <taxon>Viruses</taxon>
        <taxon>Duplodnaviria</taxon>
        <taxon>Heunggongvirae</taxon>
        <taxon>Uroviricota</taxon>
        <taxon>Caudoviricetes</taxon>
        <taxon>Fromanvirus</taxon>
    </lineage>
</organism>
<proteinExistence type="inferred from homology"/>
<reference key="1">
    <citation type="journal article" date="1998" name="J. Mol. Biol.">
        <title>Genome structure of mycobacteriophage D29: implications for phage evolution.</title>
        <authorList>
            <person name="Ford M.E."/>
            <person name="Sarkis G.J."/>
            <person name="Belanger A.E."/>
            <person name="Hendrix R.W."/>
            <person name="Hatfull G.F."/>
        </authorList>
    </citation>
    <scope>NUCLEOTIDE SEQUENCE [LARGE SCALE GENOMIC DNA]</scope>
</reference>
<keyword id="KW-1185">Reference proteome</keyword>
<keyword id="KW-0688">Ribosomal frameshifting</keyword>
<keyword id="KW-1188">Viral release from host cell</keyword>
<keyword id="KW-1245">Viral tail assembly</keyword>
<sequence>MTNVFTIDAFREEVKKKYEPVTIGISEDVTVELKPLLKLGQKAREAVVEAVKEVEDIPDIDEDDEEAEELVDEYSLRICEIVAKVFRLIATKPKKLIAALDEEEDPRIRAELYATVLRTWMVETQLGEAAPSPS</sequence>